<comment type="function">
    <text>PPIases accelerate the folding of proteins during protein synthesis.</text>
</comment>
<comment type="catalytic activity">
    <reaction>
        <text>[protein]-peptidylproline (omega=180) = [protein]-peptidylproline (omega=0)</text>
        <dbReference type="Rhea" id="RHEA:16237"/>
        <dbReference type="Rhea" id="RHEA-COMP:10747"/>
        <dbReference type="Rhea" id="RHEA-COMP:10748"/>
        <dbReference type="ChEBI" id="CHEBI:83833"/>
        <dbReference type="ChEBI" id="CHEBI:83834"/>
        <dbReference type="EC" id="5.2.1.8"/>
    </reaction>
</comment>
<comment type="activity regulation">
    <text evidence="1">Inhibited by FK506.</text>
</comment>
<comment type="subcellular location">
    <subcellularLocation>
        <location evidence="5">Endoplasmic reticulum lumen</location>
    </subcellularLocation>
</comment>
<comment type="PTM">
    <text evidence="1">Phosphorylated.</text>
</comment>
<reference key="1">
    <citation type="journal article" date="2004" name="Genome Res.">
        <title>The status, quality, and expansion of the NIH full-length cDNA project: the Mammalian Gene Collection (MGC).</title>
        <authorList>
            <consortium name="The MGC Project Team"/>
        </authorList>
    </citation>
    <scope>NUCLEOTIDE SEQUENCE [LARGE SCALE MRNA]</scope>
    <source>
        <tissue>Lung</tissue>
    </source>
</reference>
<evidence type="ECO:0000250" key="1"/>
<evidence type="ECO:0000255" key="2"/>
<evidence type="ECO:0000255" key="3">
    <source>
        <dbReference type="PROSITE-ProRule" id="PRU00277"/>
    </source>
</evidence>
<evidence type="ECO:0000255" key="4">
    <source>
        <dbReference type="PROSITE-ProRule" id="PRU00448"/>
    </source>
</evidence>
<evidence type="ECO:0000255" key="5">
    <source>
        <dbReference type="PROSITE-ProRule" id="PRU10138"/>
    </source>
</evidence>
<evidence type="ECO:0000305" key="6"/>
<name>FKBP9_RAT</name>
<feature type="signal peptide" evidence="2">
    <location>
        <begin position="1"/>
        <end position="24"/>
    </location>
</feature>
<feature type="chain" id="PRO_0000045761" description="Peptidyl-prolyl cis-trans isomerase FKBP9">
    <location>
        <begin position="25"/>
        <end position="570"/>
    </location>
</feature>
<feature type="domain" description="PPIase FKBP-type 1" evidence="3">
    <location>
        <begin position="54"/>
        <end position="142"/>
    </location>
</feature>
<feature type="domain" description="PPIase FKBP-type 2" evidence="3">
    <location>
        <begin position="166"/>
        <end position="254"/>
    </location>
</feature>
<feature type="domain" description="PPIase FKBP-type 3" evidence="3">
    <location>
        <begin position="278"/>
        <end position="365"/>
    </location>
</feature>
<feature type="domain" description="PPIase FKBP-type 4" evidence="3">
    <location>
        <begin position="389"/>
        <end position="477"/>
    </location>
</feature>
<feature type="domain" description="EF-hand 1" evidence="4">
    <location>
        <begin position="488"/>
        <end position="523"/>
    </location>
</feature>
<feature type="domain" description="EF-hand 2" evidence="4">
    <location>
        <begin position="533"/>
        <end position="568"/>
    </location>
</feature>
<feature type="short sequence motif" description="Prevents secretion from ER" evidence="5">
    <location>
        <begin position="567"/>
        <end position="570"/>
    </location>
</feature>
<feature type="binding site" evidence="6">
    <location>
        <position position="501"/>
    </location>
    <ligand>
        <name>Ca(2+)</name>
        <dbReference type="ChEBI" id="CHEBI:29108"/>
        <label>1</label>
    </ligand>
</feature>
<feature type="binding site" evidence="6">
    <location>
        <position position="503"/>
    </location>
    <ligand>
        <name>Ca(2+)</name>
        <dbReference type="ChEBI" id="CHEBI:29108"/>
        <label>1</label>
    </ligand>
</feature>
<feature type="binding site" evidence="6">
    <location>
        <position position="505"/>
    </location>
    <ligand>
        <name>Ca(2+)</name>
        <dbReference type="ChEBI" id="CHEBI:29108"/>
        <label>1</label>
    </ligand>
</feature>
<feature type="binding site" evidence="6">
    <location>
        <position position="507"/>
    </location>
    <ligand>
        <name>Ca(2+)</name>
        <dbReference type="ChEBI" id="CHEBI:29108"/>
        <label>1</label>
    </ligand>
</feature>
<feature type="binding site" evidence="6">
    <location>
        <position position="512"/>
    </location>
    <ligand>
        <name>Ca(2+)</name>
        <dbReference type="ChEBI" id="CHEBI:29108"/>
        <label>1</label>
    </ligand>
</feature>
<feature type="binding site" evidence="4">
    <location>
        <position position="546"/>
    </location>
    <ligand>
        <name>Ca(2+)</name>
        <dbReference type="ChEBI" id="CHEBI:29108"/>
        <label>2</label>
    </ligand>
</feature>
<feature type="binding site" evidence="4">
    <location>
        <position position="548"/>
    </location>
    <ligand>
        <name>Ca(2+)</name>
        <dbReference type="ChEBI" id="CHEBI:29108"/>
        <label>2</label>
    </ligand>
</feature>
<feature type="binding site" evidence="4">
    <location>
        <position position="550"/>
    </location>
    <ligand>
        <name>Ca(2+)</name>
        <dbReference type="ChEBI" id="CHEBI:29108"/>
        <label>2</label>
    </ligand>
</feature>
<feature type="binding site" evidence="4">
    <location>
        <position position="552"/>
    </location>
    <ligand>
        <name>Ca(2+)</name>
        <dbReference type="ChEBI" id="CHEBI:29108"/>
        <label>2</label>
    </ligand>
</feature>
<feature type="binding site" evidence="4">
    <location>
        <position position="557"/>
    </location>
    <ligand>
        <name>Ca(2+)</name>
        <dbReference type="ChEBI" id="CHEBI:29108"/>
        <label>2</label>
    </ligand>
</feature>
<feature type="glycosylation site" description="N-linked (GlcNAc...) asparagine" evidence="2">
    <location>
        <position position="174"/>
    </location>
</feature>
<feature type="glycosylation site" description="N-linked (GlcNAc...) asparagine" evidence="2">
    <location>
        <position position="286"/>
    </location>
</feature>
<feature type="glycosylation site" description="N-linked (GlcNAc...) asparagine" evidence="2">
    <location>
        <position position="302"/>
    </location>
</feature>
<feature type="glycosylation site" description="N-linked (GlcNAc...) asparagine" evidence="2">
    <location>
        <position position="397"/>
    </location>
</feature>
<dbReference type="EC" id="5.2.1.8"/>
<dbReference type="EMBL" id="BC081961">
    <property type="protein sequence ID" value="AAH81961.1"/>
    <property type="molecule type" value="mRNA"/>
</dbReference>
<dbReference type="RefSeq" id="NP_001007647.1">
    <property type="nucleotide sequence ID" value="NM_001007646.1"/>
</dbReference>
<dbReference type="SMR" id="Q66H94"/>
<dbReference type="FunCoup" id="Q66H94">
    <property type="interactions" value="1142"/>
</dbReference>
<dbReference type="IntAct" id="Q66H94">
    <property type="interactions" value="3"/>
</dbReference>
<dbReference type="STRING" id="10116.ENSRNOP00000007821"/>
<dbReference type="GlyCosmos" id="Q66H94">
    <property type="glycosylation" value="4 sites, No reported glycans"/>
</dbReference>
<dbReference type="GlyGen" id="Q66H94">
    <property type="glycosylation" value="4 sites"/>
</dbReference>
<dbReference type="iPTMnet" id="Q66H94"/>
<dbReference type="PhosphoSitePlus" id="Q66H94"/>
<dbReference type="PaxDb" id="10116-ENSRNOP00000007821"/>
<dbReference type="Ensembl" id="ENSRNOT00000007821.6">
    <property type="protein sequence ID" value="ENSRNOP00000007821.3"/>
    <property type="gene ID" value="ENSRNOG00000005478.6"/>
</dbReference>
<dbReference type="GeneID" id="297123"/>
<dbReference type="KEGG" id="rno:297123"/>
<dbReference type="UCSC" id="RGD:1549757">
    <property type="organism name" value="rat"/>
</dbReference>
<dbReference type="AGR" id="RGD:1549757"/>
<dbReference type="CTD" id="11328"/>
<dbReference type="RGD" id="1549757">
    <property type="gene designation" value="Fkbp9"/>
</dbReference>
<dbReference type="eggNOG" id="KOG0549">
    <property type="taxonomic scope" value="Eukaryota"/>
</dbReference>
<dbReference type="GeneTree" id="ENSGT00940000157125"/>
<dbReference type="HOGENOM" id="CLU_034907_0_0_1"/>
<dbReference type="InParanoid" id="Q66H94"/>
<dbReference type="OMA" id="TVTYKPE"/>
<dbReference type="OrthoDB" id="8467at9989"/>
<dbReference type="PhylomeDB" id="Q66H94"/>
<dbReference type="TreeFam" id="TF105296"/>
<dbReference type="PRO" id="PR:Q66H94"/>
<dbReference type="Proteomes" id="UP000002494">
    <property type="component" value="Chromosome 4"/>
</dbReference>
<dbReference type="Bgee" id="ENSRNOG00000005478">
    <property type="expression patterns" value="Expressed in ovary and 19 other cell types or tissues"/>
</dbReference>
<dbReference type="GO" id="GO:0005783">
    <property type="term" value="C:endoplasmic reticulum"/>
    <property type="evidence" value="ECO:0000266"/>
    <property type="project" value="RGD"/>
</dbReference>
<dbReference type="GO" id="GO:0005788">
    <property type="term" value="C:endoplasmic reticulum lumen"/>
    <property type="evidence" value="ECO:0007669"/>
    <property type="project" value="UniProtKB-SubCell"/>
</dbReference>
<dbReference type="GO" id="GO:0005509">
    <property type="term" value="F:calcium ion binding"/>
    <property type="evidence" value="ECO:0000266"/>
    <property type="project" value="RGD"/>
</dbReference>
<dbReference type="GO" id="GO:0003755">
    <property type="term" value="F:peptidyl-prolyl cis-trans isomerase activity"/>
    <property type="evidence" value="ECO:0000318"/>
    <property type="project" value="GO_Central"/>
</dbReference>
<dbReference type="GO" id="GO:0006457">
    <property type="term" value="P:protein folding"/>
    <property type="evidence" value="ECO:0000266"/>
    <property type="project" value="RGD"/>
</dbReference>
<dbReference type="CDD" id="cd00051">
    <property type="entry name" value="EFh"/>
    <property type="match status" value="1"/>
</dbReference>
<dbReference type="FunFam" id="1.10.238.10:FF:000102">
    <property type="entry name" value="Peptidylprolyl isomerase"/>
    <property type="match status" value="1"/>
</dbReference>
<dbReference type="FunFam" id="3.10.50.40:FF:000002">
    <property type="entry name" value="Peptidylprolyl isomerase"/>
    <property type="match status" value="4"/>
</dbReference>
<dbReference type="Gene3D" id="3.10.50.40">
    <property type="match status" value="4"/>
</dbReference>
<dbReference type="Gene3D" id="1.10.238.10">
    <property type="entry name" value="EF-hand"/>
    <property type="match status" value="1"/>
</dbReference>
<dbReference type="InterPro" id="IPR011992">
    <property type="entry name" value="EF-hand-dom_pair"/>
</dbReference>
<dbReference type="InterPro" id="IPR018247">
    <property type="entry name" value="EF_Hand_1_Ca_BS"/>
</dbReference>
<dbReference type="InterPro" id="IPR002048">
    <property type="entry name" value="EF_hand_dom"/>
</dbReference>
<dbReference type="InterPro" id="IPR051989">
    <property type="entry name" value="FKBP-like_isomerase"/>
</dbReference>
<dbReference type="InterPro" id="IPR046357">
    <property type="entry name" value="PPIase_dom_sf"/>
</dbReference>
<dbReference type="InterPro" id="IPR001179">
    <property type="entry name" value="PPIase_FKBP_dom"/>
</dbReference>
<dbReference type="PANTHER" id="PTHR46046:SF2">
    <property type="entry name" value="PEPTIDYL-PROLYL CIS-TRANS ISOMERASE FKBP9"/>
    <property type="match status" value="1"/>
</dbReference>
<dbReference type="PANTHER" id="PTHR46046">
    <property type="entry name" value="PEPTIDYLPROLYL ISOMERASE"/>
    <property type="match status" value="1"/>
</dbReference>
<dbReference type="Pfam" id="PF13202">
    <property type="entry name" value="EF-hand_5"/>
    <property type="match status" value="1"/>
</dbReference>
<dbReference type="Pfam" id="PF00254">
    <property type="entry name" value="FKBP_C"/>
    <property type="match status" value="4"/>
</dbReference>
<dbReference type="SMART" id="SM00054">
    <property type="entry name" value="EFh"/>
    <property type="match status" value="2"/>
</dbReference>
<dbReference type="SUPFAM" id="SSF47473">
    <property type="entry name" value="EF-hand"/>
    <property type="match status" value="1"/>
</dbReference>
<dbReference type="SUPFAM" id="SSF54534">
    <property type="entry name" value="FKBP-like"/>
    <property type="match status" value="4"/>
</dbReference>
<dbReference type="PROSITE" id="PS00018">
    <property type="entry name" value="EF_HAND_1"/>
    <property type="match status" value="1"/>
</dbReference>
<dbReference type="PROSITE" id="PS50222">
    <property type="entry name" value="EF_HAND_2"/>
    <property type="match status" value="2"/>
</dbReference>
<dbReference type="PROSITE" id="PS00014">
    <property type="entry name" value="ER_TARGET"/>
    <property type="match status" value="1"/>
</dbReference>
<dbReference type="PROSITE" id="PS50059">
    <property type="entry name" value="FKBP_PPIASE"/>
    <property type="match status" value="4"/>
</dbReference>
<accession>Q66H94</accession>
<sequence>MAFGARGWRRWSLLLLLLWVTGQAAPVLGLAVSSELQIQRSFVPDECPRTVRSGDFVRYHYVGTFLDGQKFDSSYDRDSTFSVFVGKGQLIAGMDQALVGMCVNERRFVTIPPNLAYGSEGVSGVIPPNSVLHFDVLLVDIWNSEDQVQIQTYFKPPSCPRTIQVSDFVRYHYNGTFLDGTLFDSSHNRMKTYDTYVGIGWLIPGMDKGLLGMCVGEKRIITIPPFLAYGEEGDGKDIPGQASLVFDVALLDLHNPKDTISVENKVVPESCERRSQSGDFLRYHYNGTLLDGTLFDSSYSRNHTFDTYIGQGYVIPGMDEGLLGVCIGERRRIVVPPHLGYGEEGRGSIPGSAVLVFDIHVIDFHNPSDSISITSHYKPPDCSVLSKKGDYLKYHYNASLLDGTLLDSTWNLGKTYNIVLGFGQVVLGMDMGLREMCVGEKRTVIIPPHLGYGEAGVDGEVPGSAVLVFDIELLELVSGLPEGYMFIWNGEVSPNLFEEIDKDGNGEVLLEEFSEYIHAQVASGKGKLAPGFNAEMIVKNMFTNQDRNGDGKVTAEEFKLKDQETKHDEL</sequence>
<proteinExistence type="evidence at transcript level"/>
<protein>
    <recommendedName>
        <fullName>Peptidyl-prolyl cis-trans isomerase FKBP9</fullName>
        <shortName>PPIase FKBP9</shortName>
        <ecNumber>5.2.1.8</ecNumber>
    </recommendedName>
    <alternativeName>
        <fullName>FK506-binding protein 9</fullName>
        <shortName>FKBP-9</shortName>
    </alternativeName>
    <alternativeName>
        <fullName>Rotamase</fullName>
    </alternativeName>
</protein>
<organism>
    <name type="scientific">Rattus norvegicus</name>
    <name type="common">Rat</name>
    <dbReference type="NCBI Taxonomy" id="10116"/>
    <lineage>
        <taxon>Eukaryota</taxon>
        <taxon>Metazoa</taxon>
        <taxon>Chordata</taxon>
        <taxon>Craniata</taxon>
        <taxon>Vertebrata</taxon>
        <taxon>Euteleostomi</taxon>
        <taxon>Mammalia</taxon>
        <taxon>Eutheria</taxon>
        <taxon>Euarchontoglires</taxon>
        <taxon>Glires</taxon>
        <taxon>Rodentia</taxon>
        <taxon>Myomorpha</taxon>
        <taxon>Muroidea</taxon>
        <taxon>Muridae</taxon>
        <taxon>Murinae</taxon>
        <taxon>Rattus</taxon>
    </lineage>
</organism>
<gene>
    <name type="primary">Fkbp9</name>
</gene>
<keyword id="KW-0106">Calcium</keyword>
<keyword id="KW-0256">Endoplasmic reticulum</keyword>
<keyword id="KW-0325">Glycoprotein</keyword>
<keyword id="KW-0413">Isomerase</keyword>
<keyword id="KW-0479">Metal-binding</keyword>
<keyword id="KW-1185">Reference proteome</keyword>
<keyword id="KW-0677">Repeat</keyword>
<keyword id="KW-0697">Rotamase</keyword>
<keyword id="KW-0732">Signal</keyword>